<keyword id="KW-0025">Alternative splicing</keyword>
<keyword id="KW-1003">Cell membrane</keyword>
<keyword id="KW-0966">Cell projection</keyword>
<keyword id="KW-1186">Ciliopathy</keyword>
<keyword id="KW-0970">Cilium biogenesis/degradation</keyword>
<keyword id="KW-0225">Disease variant</keyword>
<keyword id="KW-0325">Glycoprotein</keyword>
<keyword id="KW-0981">Meckel syndrome</keyword>
<keyword id="KW-0472">Membrane</keyword>
<keyword id="KW-1267">Proteomics identification</keyword>
<keyword id="KW-1185">Reference proteome</keyword>
<keyword id="KW-0732">Signal</keyword>
<keyword id="KW-0812">Transmembrane</keyword>
<keyword id="KW-1133">Transmembrane helix</keyword>
<comment type="function">
    <text evidence="1 7">Acts as a positive regulator of ciliary hedgehog signaling (By similarity). Involved in ciliogenesis (PubMed:27894351).</text>
</comment>
<comment type="interaction">
    <interactant intactId="EBI-2908241">
        <id>Q96J42</id>
    </interactant>
    <interactant intactId="EBI-12092171">
        <id>Q12797-6</id>
        <label>ASPH</label>
    </interactant>
    <organismsDiffer>false</organismsDiffer>
    <experiments>3</experiments>
</comment>
<comment type="subcellular location">
    <subcellularLocation>
        <location evidence="1">Cell projection</location>
        <location evidence="1">Cilium membrane</location>
        <topology evidence="2">Single-pass type I membrane protein</topology>
    </subcellularLocation>
</comment>
<comment type="alternative products">
    <event type="alternative splicing"/>
    <isoform>
        <id>Q96J42-1</id>
        <name>1</name>
        <sequence type="displayed"/>
    </isoform>
    <isoform>
        <id>Q96J42-2</id>
        <name>2</name>
        <sequence type="described" ref="VSP_027129"/>
    </isoform>
</comment>
<comment type="disease" evidence="7 8 9">
    <disease id="DI-06429">
        <name>Meckel syndrome 14</name>
        <acronym>MKS14</acronym>
        <description>A form of Meckel syndrome, an autosomal recessive disorder characterized by a combination of renal cysts and variably associated features including developmental anomalies of the central nervous system (typically encephalocele), hepatic ductal dysplasia and cysts, and polydactyly. Death occurs in the prenatal or perinatal period.</description>
        <dbReference type="MIM" id="619879"/>
    </disease>
    <text>The disease is caused by variants affecting the gene represented in this entry.</text>
</comment>
<comment type="caution">
    <text evidence="11">It is uncertain whether Met-1 or Met-13 is the initiator.</text>
</comment>
<sequence>MVPAAGRRPPRVMRLLGWWQVLLWVLGLPVRGVEVAEESGRLWSEEQPAHPLQVGAVYLGEEELLHDPMGQDRAAEEANAVLGLDTQGDHMVMLSVIPGEAEDKVSSEPSGVTCGAGGAEDSRCNVRESLFSLDGAGAHFPDREEEYYTEPEVAESDAAPTEDSNNTESLKSPKVNCEERNITGLENFTLKILNMSQDLMDFLNPNGSDCTLVLFYTPWCRFSASLAPHFNSLPRAFPALHFLALDASQHSSLSTRFGTVAVPNILLFQGAKPMARFNHTDRTLETLKIFIFNQTGIEAKKNVVVTQADQIGPLPSTLIKSVDWLLVFSLFFLISFIMYATIRTESIRWLIPGQEQEHVE</sequence>
<protein>
    <recommendedName>
        <fullName>Thioredoxin domain-containing protein 15</fullName>
    </recommendedName>
</protein>
<gene>
    <name type="primary">TXNDC15</name>
    <name type="synonym">C5orf14</name>
    <name type="ORF">UNQ335/PRO534</name>
</gene>
<accession>Q96J42</accession>
<accession>D3DQA9</accession>
<accession>Q96MT2</accession>
<accession>Q9H639</accession>
<dbReference type="EMBL" id="AY358649">
    <property type="protein sequence ID" value="AAQ89012.1"/>
    <property type="molecule type" value="mRNA"/>
</dbReference>
<dbReference type="EMBL" id="AK026278">
    <property type="protein sequence ID" value="BAB15427.1"/>
    <property type="molecule type" value="mRNA"/>
</dbReference>
<dbReference type="EMBL" id="AK056512">
    <property type="protein sequence ID" value="BAB71199.1"/>
    <property type="molecule type" value="mRNA"/>
</dbReference>
<dbReference type="EMBL" id="CH471062">
    <property type="protein sequence ID" value="EAW62231.1"/>
    <property type="molecule type" value="Genomic_DNA"/>
</dbReference>
<dbReference type="EMBL" id="CH471062">
    <property type="protein sequence ID" value="EAW62233.1"/>
    <property type="molecule type" value="Genomic_DNA"/>
</dbReference>
<dbReference type="EMBL" id="BC001615">
    <property type="protein sequence ID" value="AAH01615.1"/>
    <property type="molecule type" value="mRNA"/>
</dbReference>
<dbReference type="EMBL" id="BC032568">
    <property type="protein sequence ID" value="AAH32568.1"/>
    <property type="molecule type" value="mRNA"/>
</dbReference>
<dbReference type="CCDS" id="CCDS4180.1">
    <molecule id="Q96J42-1"/>
</dbReference>
<dbReference type="RefSeq" id="NP_078991.3">
    <molecule id="Q96J42-1"/>
    <property type="nucleotide sequence ID" value="NM_024715.3"/>
</dbReference>
<dbReference type="SMR" id="Q96J42"/>
<dbReference type="BioGRID" id="122874">
    <property type="interactions" value="67"/>
</dbReference>
<dbReference type="FunCoup" id="Q96J42">
    <property type="interactions" value="649"/>
</dbReference>
<dbReference type="IntAct" id="Q96J42">
    <property type="interactions" value="50"/>
</dbReference>
<dbReference type="STRING" id="9606.ENSP00000351157"/>
<dbReference type="GlyConnect" id="1801">
    <property type="glycosylation" value="13 N-Linked glycans (2 sites)"/>
</dbReference>
<dbReference type="GlyCosmos" id="Q96J42">
    <property type="glycosylation" value="5 sites, 12 glycans"/>
</dbReference>
<dbReference type="GlyGen" id="Q96J42">
    <property type="glycosylation" value="10 sites, 24 N-linked glycans (5 sites), 1 O-linked glycan (3 sites)"/>
</dbReference>
<dbReference type="iPTMnet" id="Q96J42"/>
<dbReference type="PhosphoSitePlus" id="Q96J42"/>
<dbReference type="BioMuta" id="TXNDC15"/>
<dbReference type="DMDM" id="74732127"/>
<dbReference type="jPOST" id="Q96J42"/>
<dbReference type="MassIVE" id="Q96J42"/>
<dbReference type="PaxDb" id="9606-ENSP00000351157"/>
<dbReference type="PeptideAtlas" id="Q96J42"/>
<dbReference type="ProteomicsDB" id="76884">
    <molecule id="Q96J42-1"/>
</dbReference>
<dbReference type="ProteomicsDB" id="76885">
    <molecule id="Q96J42-2"/>
</dbReference>
<dbReference type="Pumba" id="Q96J42"/>
<dbReference type="TopDownProteomics" id="Q96J42-1">
    <molecule id="Q96J42-1"/>
</dbReference>
<dbReference type="Antibodypedia" id="2125">
    <property type="antibodies" value="77 antibodies from 14 providers"/>
</dbReference>
<dbReference type="DNASU" id="79770"/>
<dbReference type="Ensembl" id="ENST00000358387.9">
    <molecule id="Q96J42-1"/>
    <property type="protein sequence ID" value="ENSP00000351157.5"/>
    <property type="gene ID" value="ENSG00000113621.15"/>
</dbReference>
<dbReference type="GeneID" id="79770"/>
<dbReference type="KEGG" id="hsa:79770"/>
<dbReference type="MANE-Select" id="ENST00000358387.9">
    <property type="protein sequence ID" value="ENSP00000351157.5"/>
    <property type="RefSeq nucleotide sequence ID" value="NM_024715.4"/>
    <property type="RefSeq protein sequence ID" value="NP_078991.3"/>
</dbReference>
<dbReference type="UCSC" id="uc003lac.2">
    <molecule id="Q96J42-1"/>
    <property type="organism name" value="human"/>
</dbReference>
<dbReference type="AGR" id="HGNC:20652"/>
<dbReference type="CTD" id="79770"/>
<dbReference type="DisGeNET" id="79770"/>
<dbReference type="GeneCards" id="TXNDC15"/>
<dbReference type="HGNC" id="HGNC:20652">
    <property type="gene designation" value="TXNDC15"/>
</dbReference>
<dbReference type="HPA" id="ENSG00000113621">
    <property type="expression patterns" value="Low tissue specificity"/>
</dbReference>
<dbReference type="MalaCards" id="TXNDC15"/>
<dbReference type="MIM" id="617778">
    <property type="type" value="gene"/>
</dbReference>
<dbReference type="MIM" id="619879">
    <property type="type" value="phenotype"/>
</dbReference>
<dbReference type="neXtProt" id="NX_Q96J42"/>
<dbReference type="OpenTargets" id="ENSG00000113621"/>
<dbReference type="Orphanet" id="564">
    <property type="disease" value="Meckel syndrome"/>
</dbReference>
<dbReference type="PharmGKB" id="PA162407473"/>
<dbReference type="VEuPathDB" id="HostDB:ENSG00000113621"/>
<dbReference type="eggNOG" id="KOG2640">
    <property type="taxonomic scope" value="Eukaryota"/>
</dbReference>
<dbReference type="GeneTree" id="ENSGT00390000002845"/>
<dbReference type="HOGENOM" id="CLU_050221_0_0_1"/>
<dbReference type="InParanoid" id="Q96J42"/>
<dbReference type="OMA" id="TCEERNV"/>
<dbReference type="OrthoDB" id="1899781at2759"/>
<dbReference type="PAN-GO" id="Q96J42">
    <property type="GO annotations" value="2 GO annotations based on evolutionary models"/>
</dbReference>
<dbReference type="PhylomeDB" id="Q96J42"/>
<dbReference type="TreeFam" id="TF323528"/>
<dbReference type="PathwayCommons" id="Q96J42"/>
<dbReference type="SignaLink" id="Q96J42"/>
<dbReference type="BioGRID-ORCS" id="79770">
    <property type="hits" value="14 hits in 1159 CRISPR screens"/>
</dbReference>
<dbReference type="GenomeRNAi" id="79770"/>
<dbReference type="Pharos" id="Q96J42">
    <property type="development level" value="Tbio"/>
</dbReference>
<dbReference type="PRO" id="PR:Q96J42"/>
<dbReference type="Proteomes" id="UP000005640">
    <property type="component" value="Chromosome 5"/>
</dbReference>
<dbReference type="RNAct" id="Q96J42">
    <property type="molecule type" value="protein"/>
</dbReference>
<dbReference type="Bgee" id="ENSG00000113621">
    <property type="expression patterns" value="Expressed in calcaneal tendon and 200 other cell types or tissues"/>
</dbReference>
<dbReference type="ExpressionAtlas" id="Q96J42">
    <property type="expression patterns" value="baseline and differential"/>
</dbReference>
<dbReference type="GO" id="GO:0060170">
    <property type="term" value="C:ciliary membrane"/>
    <property type="evidence" value="ECO:0007669"/>
    <property type="project" value="UniProtKB-SubCell"/>
</dbReference>
<dbReference type="GO" id="GO:0005929">
    <property type="term" value="C:cilium"/>
    <property type="evidence" value="ECO:0000250"/>
    <property type="project" value="UniProtKB"/>
</dbReference>
<dbReference type="GO" id="GO:0060271">
    <property type="term" value="P:cilium assembly"/>
    <property type="evidence" value="ECO:0000250"/>
    <property type="project" value="UniProtKB"/>
</dbReference>
<dbReference type="GO" id="GO:0045880">
    <property type="term" value="P:positive regulation of smoothened signaling pathway"/>
    <property type="evidence" value="ECO:0000250"/>
    <property type="project" value="UniProtKB"/>
</dbReference>
<dbReference type="CDD" id="cd02999">
    <property type="entry name" value="PDI_a_ERp44_like"/>
    <property type="match status" value="1"/>
</dbReference>
<dbReference type="Gene3D" id="3.40.30.10">
    <property type="entry name" value="Glutaredoxin"/>
    <property type="match status" value="1"/>
</dbReference>
<dbReference type="InterPro" id="IPR036249">
    <property type="entry name" value="Thioredoxin-like_sf"/>
</dbReference>
<dbReference type="InterPro" id="IPR013766">
    <property type="entry name" value="Thioredoxin_domain"/>
</dbReference>
<dbReference type="InterPro" id="IPR042418">
    <property type="entry name" value="TXNDC15"/>
</dbReference>
<dbReference type="PANTHER" id="PTHR14684">
    <property type="entry name" value="THIOREDOXIN DOMAIN-CONTAINING PROTEIN 15"/>
    <property type="match status" value="1"/>
</dbReference>
<dbReference type="PANTHER" id="PTHR14684:SF2">
    <property type="entry name" value="THIOREDOXIN DOMAIN-CONTAINING PROTEIN 15"/>
    <property type="match status" value="1"/>
</dbReference>
<dbReference type="Pfam" id="PF00085">
    <property type="entry name" value="Thioredoxin"/>
    <property type="match status" value="1"/>
</dbReference>
<dbReference type="SUPFAM" id="SSF52833">
    <property type="entry name" value="Thioredoxin-like"/>
    <property type="match status" value="1"/>
</dbReference>
<dbReference type="PROSITE" id="PS51352">
    <property type="entry name" value="THIOREDOXIN_2"/>
    <property type="match status" value="1"/>
</dbReference>
<organism>
    <name type="scientific">Homo sapiens</name>
    <name type="common">Human</name>
    <dbReference type="NCBI Taxonomy" id="9606"/>
    <lineage>
        <taxon>Eukaryota</taxon>
        <taxon>Metazoa</taxon>
        <taxon>Chordata</taxon>
        <taxon>Craniata</taxon>
        <taxon>Vertebrata</taxon>
        <taxon>Euteleostomi</taxon>
        <taxon>Mammalia</taxon>
        <taxon>Eutheria</taxon>
        <taxon>Euarchontoglires</taxon>
        <taxon>Primates</taxon>
        <taxon>Haplorrhini</taxon>
        <taxon>Catarrhini</taxon>
        <taxon>Hominidae</taxon>
        <taxon>Homo</taxon>
    </lineage>
</organism>
<evidence type="ECO:0000250" key="1">
    <source>
        <dbReference type="UniProtKB" id="Q6P6J9"/>
    </source>
</evidence>
<evidence type="ECO:0000255" key="2"/>
<evidence type="ECO:0000255" key="3">
    <source>
        <dbReference type="PROSITE-ProRule" id="PRU00691"/>
    </source>
</evidence>
<evidence type="ECO:0000256" key="4">
    <source>
        <dbReference type="SAM" id="MobiDB-lite"/>
    </source>
</evidence>
<evidence type="ECO:0000269" key="5">
    <source>
    </source>
</evidence>
<evidence type="ECO:0000269" key="6">
    <source>
    </source>
</evidence>
<evidence type="ECO:0000269" key="7">
    <source>
    </source>
</evidence>
<evidence type="ECO:0000269" key="8">
    <source>
    </source>
</evidence>
<evidence type="ECO:0000269" key="9">
    <source>
    </source>
</evidence>
<evidence type="ECO:0000303" key="10">
    <source>
    </source>
</evidence>
<evidence type="ECO:0000305" key="11"/>
<proteinExistence type="evidence at protein level"/>
<name>TXD15_HUMAN</name>
<reference key="1">
    <citation type="journal article" date="2003" name="Genome Res.">
        <title>The secreted protein discovery initiative (SPDI), a large-scale effort to identify novel human secreted and transmembrane proteins: a bioinformatics assessment.</title>
        <authorList>
            <person name="Clark H.F."/>
            <person name="Gurney A.L."/>
            <person name="Abaya E."/>
            <person name="Baker K."/>
            <person name="Baldwin D.T."/>
            <person name="Brush J."/>
            <person name="Chen J."/>
            <person name="Chow B."/>
            <person name="Chui C."/>
            <person name="Crowley C."/>
            <person name="Currell B."/>
            <person name="Deuel B."/>
            <person name="Dowd P."/>
            <person name="Eaton D."/>
            <person name="Foster J.S."/>
            <person name="Grimaldi C."/>
            <person name="Gu Q."/>
            <person name="Hass P.E."/>
            <person name="Heldens S."/>
            <person name="Huang A."/>
            <person name="Kim H.S."/>
            <person name="Klimowski L."/>
            <person name="Jin Y."/>
            <person name="Johnson S."/>
            <person name="Lee J."/>
            <person name="Lewis L."/>
            <person name="Liao D."/>
            <person name="Mark M.R."/>
            <person name="Robbie E."/>
            <person name="Sanchez C."/>
            <person name="Schoenfeld J."/>
            <person name="Seshagiri S."/>
            <person name="Simmons L."/>
            <person name="Singh J."/>
            <person name="Smith V."/>
            <person name="Stinson J."/>
            <person name="Vagts A."/>
            <person name="Vandlen R.L."/>
            <person name="Watanabe C."/>
            <person name="Wieand D."/>
            <person name="Woods K."/>
            <person name="Xie M.-H."/>
            <person name="Yansura D.G."/>
            <person name="Yi S."/>
            <person name="Yu G."/>
            <person name="Yuan J."/>
            <person name="Zhang M."/>
            <person name="Zhang Z."/>
            <person name="Goddard A.D."/>
            <person name="Wood W.I."/>
            <person name="Godowski P.J."/>
            <person name="Gray A.M."/>
        </authorList>
    </citation>
    <scope>NUCLEOTIDE SEQUENCE [LARGE SCALE MRNA] (ISOFORM 1)</scope>
</reference>
<reference key="2">
    <citation type="journal article" date="2004" name="Nat. Genet.">
        <title>Complete sequencing and characterization of 21,243 full-length human cDNAs.</title>
        <authorList>
            <person name="Ota T."/>
            <person name="Suzuki Y."/>
            <person name="Nishikawa T."/>
            <person name="Otsuki T."/>
            <person name="Sugiyama T."/>
            <person name="Irie R."/>
            <person name="Wakamatsu A."/>
            <person name="Hayashi K."/>
            <person name="Sato H."/>
            <person name="Nagai K."/>
            <person name="Kimura K."/>
            <person name="Makita H."/>
            <person name="Sekine M."/>
            <person name="Obayashi M."/>
            <person name="Nishi T."/>
            <person name="Shibahara T."/>
            <person name="Tanaka T."/>
            <person name="Ishii S."/>
            <person name="Yamamoto J."/>
            <person name="Saito K."/>
            <person name="Kawai Y."/>
            <person name="Isono Y."/>
            <person name="Nakamura Y."/>
            <person name="Nagahari K."/>
            <person name="Murakami K."/>
            <person name="Yasuda T."/>
            <person name="Iwayanagi T."/>
            <person name="Wagatsuma M."/>
            <person name="Shiratori A."/>
            <person name="Sudo H."/>
            <person name="Hosoiri T."/>
            <person name="Kaku Y."/>
            <person name="Kodaira H."/>
            <person name="Kondo H."/>
            <person name="Sugawara M."/>
            <person name="Takahashi M."/>
            <person name="Kanda K."/>
            <person name="Yokoi T."/>
            <person name="Furuya T."/>
            <person name="Kikkawa E."/>
            <person name="Omura Y."/>
            <person name="Abe K."/>
            <person name="Kamihara K."/>
            <person name="Katsuta N."/>
            <person name="Sato K."/>
            <person name="Tanikawa M."/>
            <person name="Yamazaki M."/>
            <person name="Ninomiya K."/>
            <person name="Ishibashi T."/>
            <person name="Yamashita H."/>
            <person name="Murakawa K."/>
            <person name="Fujimori K."/>
            <person name="Tanai H."/>
            <person name="Kimata M."/>
            <person name="Watanabe M."/>
            <person name="Hiraoka S."/>
            <person name="Chiba Y."/>
            <person name="Ishida S."/>
            <person name="Ono Y."/>
            <person name="Takiguchi S."/>
            <person name="Watanabe S."/>
            <person name="Yosida M."/>
            <person name="Hotuta T."/>
            <person name="Kusano J."/>
            <person name="Kanehori K."/>
            <person name="Takahashi-Fujii A."/>
            <person name="Hara H."/>
            <person name="Tanase T.-O."/>
            <person name="Nomura Y."/>
            <person name="Togiya S."/>
            <person name="Komai F."/>
            <person name="Hara R."/>
            <person name="Takeuchi K."/>
            <person name="Arita M."/>
            <person name="Imose N."/>
            <person name="Musashino K."/>
            <person name="Yuuki H."/>
            <person name="Oshima A."/>
            <person name="Sasaki N."/>
            <person name="Aotsuka S."/>
            <person name="Yoshikawa Y."/>
            <person name="Matsunawa H."/>
            <person name="Ichihara T."/>
            <person name="Shiohata N."/>
            <person name="Sano S."/>
            <person name="Moriya S."/>
            <person name="Momiyama H."/>
            <person name="Satoh N."/>
            <person name="Takami S."/>
            <person name="Terashima Y."/>
            <person name="Suzuki O."/>
            <person name="Nakagawa S."/>
            <person name="Senoh A."/>
            <person name="Mizoguchi H."/>
            <person name="Goto Y."/>
            <person name="Shimizu F."/>
            <person name="Wakebe H."/>
            <person name="Hishigaki H."/>
            <person name="Watanabe T."/>
            <person name="Sugiyama A."/>
            <person name="Takemoto M."/>
            <person name="Kawakami B."/>
            <person name="Yamazaki M."/>
            <person name="Watanabe K."/>
            <person name="Kumagai A."/>
            <person name="Itakura S."/>
            <person name="Fukuzumi Y."/>
            <person name="Fujimori Y."/>
            <person name="Komiyama M."/>
            <person name="Tashiro H."/>
            <person name="Tanigami A."/>
            <person name="Fujiwara T."/>
            <person name="Ono T."/>
            <person name="Yamada K."/>
            <person name="Fujii Y."/>
            <person name="Ozaki K."/>
            <person name="Hirao M."/>
            <person name="Ohmori Y."/>
            <person name="Kawabata A."/>
            <person name="Hikiji T."/>
            <person name="Kobatake N."/>
            <person name="Inagaki H."/>
            <person name="Ikema Y."/>
            <person name="Okamoto S."/>
            <person name="Okitani R."/>
            <person name="Kawakami T."/>
            <person name="Noguchi S."/>
            <person name="Itoh T."/>
            <person name="Shigeta K."/>
            <person name="Senba T."/>
            <person name="Matsumura K."/>
            <person name="Nakajima Y."/>
            <person name="Mizuno T."/>
            <person name="Morinaga M."/>
            <person name="Sasaki M."/>
            <person name="Togashi T."/>
            <person name="Oyama M."/>
            <person name="Hata H."/>
            <person name="Watanabe M."/>
            <person name="Komatsu T."/>
            <person name="Mizushima-Sugano J."/>
            <person name="Satoh T."/>
            <person name="Shirai Y."/>
            <person name="Takahashi Y."/>
            <person name="Nakagawa K."/>
            <person name="Okumura K."/>
            <person name="Nagase T."/>
            <person name="Nomura N."/>
            <person name="Kikuchi H."/>
            <person name="Masuho Y."/>
            <person name="Yamashita R."/>
            <person name="Nakai K."/>
            <person name="Yada T."/>
            <person name="Nakamura Y."/>
            <person name="Ohara O."/>
            <person name="Isogai T."/>
            <person name="Sugano S."/>
        </authorList>
    </citation>
    <scope>NUCLEOTIDE SEQUENCE [LARGE SCALE MRNA] (ISOFORMS 1 AND 2)</scope>
    <source>
        <tissue>Small intestine</tissue>
        <tissue>Teratocarcinoma</tissue>
    </source>
</reference>
<reference key="3">
    <citation type="submission" date="2005-09" db="EMBL/GenBank/DDBJ databases">
        <authorList>
            <person name="Mural R.J."/>
            <person name="Istrail S."/>
            <person name="Sutton G.G."/>
            <person name="Florea L."/>
            <person name="Halpern A.L."/>
            <person name="Mobarry C.M."/>
            <person name="Lippert R."/>
            <person name="Walenz B."/>
            <person name="Shatkay H."/>
            <person name="Dew I."/>
            <person name="Miller J.R."/>
            <person name="Flanigan M.J."/>
            <person name="Edwards N.J."/>
            <person name="Bolanos R."/>
            <person name="Fasulo D."/>
            <person name="Halldorsson B.V."/>
            <person name="Hannenhalli S."/>
            <person name="Turner R."/>
            <person name="Yooseph S."/>
            <person name="Lu F."/>
            <person name="Nusskern D.R."/>
            <person name="Shue B.C."/>
            <person name="Zheng X.H."/>
            <person name="Zhong F."/>
            <person name="Delcher A.L."/>
            <person name="Huson D.H."/>
            <person name="Kravitz S.A."/>
            <person name="Mouchard L."/>
            <person name="Reinert K."/>
            <person name="Remington K.A."/>
            <person name="Clark A.G."/>
            <person name="Waterman M.S."/>
            <person name="Eichler E.E."/>
            <person name="Adams M.D."/>
            <person name="Hunkapiller M.W."/>
            <person name="Myers E.W."/>
            <person name="Venter J.C."/>
        </authorList>
    </citation>
    <scope>NUCLEOTIDE SEQUENCE [LARGE SCALE GENOMIC DNA]</scope>
</reference>
<reference key="4">
    <citation type="journal article" date="2004" name="Genome Res.">
        <title>The status, quality, and expansion of the NIH full-length cDNA project: the Mammalian Gene Collection (MGC).</title>
        <authorList>
            <consortium name="The MGC Project Team"/>
        </authorList>
    </citation>
    <scope>NUCLEOTIDE SEQUENCE [LARGE SCALE MRNA] (ISOFORM 1)</scope>
    <source>
        <tissue>Kidney</tissue>
        <tissue>Pancreas</tissue>
    </source>
</reference>
<reference key="5">
    <citation type="journal article" date="2009" name="J. Proteome Res.">
        <title>Glycoproteomics analysis of human liver tissue by combination of multiple enzyme digestion and hydrazide chemistry.</title>
        <authorList>
            <person name="Chen R."/>
            <person name="Jiang X."/>
            <person name="Sun D."/>
            <person name="Han G."/>
            <person name="Wang F."/>
            <person name="Ye M."/>
            <person name="Wang L."/>
            <person name="Zou H."/>
        </authorList>
    </citation>
    <scope>GLYCOSYLATION [LARGE SCALE ANALYSIS] AT ASN-293</scope>
    <source>
        <tissue>Liver</tissue>
    </source>
</reference>
<reference key="6">
    <citation type="journal article" date="2006" name="Science">
        <title>The consensus coding sequences of human breast and colorectal cancers.</title>
        <authorList>
            <person name="Sjoeblom T."/>
            <person name="Jones S."/>
            <person name="Wood L.D."/>
            <person name="Parsons D.W."/>
            <person name="Lin J."/>
            <person name="Barber T.D."/>
            <person name="Mandelker D."/>
            <person name="Leary R.J."/>
            <person name="Ptak J."/>
            <person name="Silliman N."/>
            <person name="Szabo S."/>
            <person name="Buckhaults P."/>
            <person name="Farrell C."/>
            <person name="Meeh P."/>
            <person name="Markowitz S.D."/>
            <person name="Willis J."/>
            <person name="Dawson D."/>
            <person name="Willson J.K.V."/>
            <person name="Gazdar A.F."/>
            <person name="Hartigan J."/>
            <person name="Wu L."/>
            <person name="Liu C."/>
            <person name="Parmigiani G."/>
            <person name="Park B.H."/>
            <person name="Bachman K.E."/>
            <person name="Papadopoulos N."/>
            <person name="Vogelstein B."/>
            <person name="Kinzler K.W."/>
            <person name="Velculescu V.E."/>
        </authorList>
    </citation>
    <scope>VARIANT [LARGE SCALE ANALYSIS] PRO-248</scope>
</reference>
<reference key="7">
    <citation type="journal article" date="2016" name="Genome Biol.">
        <title>Characterizing the morbid genome of ciliopathies.</title>
        <authorList>
            <consortium name="Ciliopathy WorkingGroup"/>
            <person name="Shaheen R."/>
            <person name="Szymanska K."/>
            <person name="Basu B."/>
            <person name="Patel N."/>
            <person name="Ewida N."/>
            <person name="Faqeih E."/>
            <person name="Al Hashem A."/>
            <person name="Derar N."/>
            <person name="Alsharif H."/>
            <person name="Aldahmesh M.A."/>
            <person name="Alazami A.M."/>
            <person name="Hashem M."/>
            <person name="Ibrahim N."/>
            <person name="Abdulwahab F.M."/>
            <person name="Sonbul R."/>
            <person name="Alkuraya H."/>
            <person name="Alnemer M."/>
            <person name="Al Tala S."/>
            <person name="Al-Husain M."/>
            <person name="Morsy H."/>
            <person name="Seidahmed M.Z."/>
            <person name="Meriki N."/>
            <person name="Al-Owain M."/>
            <person name="AlShahwan S."/>
            <person name="Tabarki B."/>
            <person name="Salih M.A."/>
            <person name="Faquih T."/>
            <person name="El-Kalioby M."/>
            <person name="Ueffing M."/>
            <person name="Boldt K."/>
            <person name="Logan C.V."/>
            <person name="Parry D.A."/>
            <person name="Al Tassan N."/>
            <person name="Monies D."/>
            <person name="Megarbane A."/>
            <person name="Abouelhoda M."/>
            <person name="Halees A."/>
            <person name="Johnson C.A."/>
            <person name="Alkuraya F.S."/>
        </authorList>
    </citation>
    <scope>INVOLVEMENT IN MKS14</scope>
    <scope>FUNCTION</scope>
</reference>
<reference key="8">
    <citation type="journal article" date="2019" name="Clin. Genet.">
        <title>Meckel syndrome: Clinical and mutation profile in six fetuses.</title>
        <authorList>
            <person name="Radhakrishnan P."/>
            <person name="Nayak S.S."/>
            <person name="Shukla A."/>
            <person name="Lindstrand A."/>
            <person name="Girisha K.M."/>
        </authorList>
    </citation>
    <scope>VARIANT MKS14 282-ARG--GLU-360 DEL</scope>
</reference>
<reference key="9">
    <citation type="journal article" date="2019" name="Mol. Genet. Genomic Med.">
        <title>A prenatally diagnosed case of Meckel-Gruber syndrome with novel compound heterozygous pathogenic variants in the TXNDC15 gene.</title>
        <authorList>
            <person name="Ridnoi K."/>
            <person name="Sois M."/>
            <person name="Vaidla E."/>
            <person name="Pajusalu S."/>
            <person name="Kelder L."/>
            <person name="Reimand T."/>
            <person name="Ounap K."/>
        </authorList>
    </citation>
    <scope>VARIANT MKS14 PRO-212</scope>
    <scope>INVOLVEMENT IN MKS14</scope>
</reference>
<feature type="signal peptide" evidence="2">
    <location>
        <begin position="1"/>
        <end position="32"/>
    </location>
</feature>
<feature type="chain" id="PRO_0000296094" description="Thioredoxin domain-containing protein 15">
    <location>
        <begin position="33"/>
        <end position="360"/>
    </location>
</feature>
<feature type="topological domain" description="Extracellular" evidence="2">
    <location>
        <begin position="33"/>
        <end position="321"/>
    </location>
</feature>
<feature type="transmembrane region" description="Helical" evidence="2">
    <location>
        <begin position="322"/>
        <end position="342"/>
    </location>
</feature>
<feature type="topological domain" description="Cytoplasmic" evidence="2">
    <location>
        <begin position="343"/>
        <end position="360"/>
    </location>
</feature>
<feature type="domain" description="Thioredoxin" evidence="3">
    <location>
        <begin position="153"/>
        <end position="296"/>
    </location>
</feature>
<feature type="region of interest" description="Disordered" evidence="4">
    <location>
        <begin position="141"/>
        <end position="173"/>
    </location>
</feature>
<feature type="compositionally biased region" description="Acidic residues" evidence="4">
    <location>
        <begin position="143"/>
        <end position="155"/>
    </location>
</feature>
<feature type="glycosylation site" description="N-linked (GlcNAc...) asparagine" evidence="2">
    <location>
        <position position="187"/>
    </location>
</feature>
<feature type="glycosylation site" description="N-linked (GlcNAc...) asparagine" evidence="2">
    <location>
        <position position="194"/>
    </location>
</feature>
<feature type="glycosylation site" description="N-linked (GlcNAc...) asparagine" evidence="2">
    <location>
        <position position="206"/>
    </location>
</feature>
<feature type="glycosylation site" description="N-linked (GlcNAc...) asparagine" evidence="6">
    <location>
        <position position="293"/>
    </location>
</feature>
<feature type="splice variant" id="VSP_027129" description="In isoform 2." evidence="10">
    <location>
        <begin position="45"/>
        <end position="61"/>
    </location>
</feature>
<feature type="sequence variant" id="VAR_082162" description="In MKS14; uncertain significance; dbSNP:rs760579409." evidence="8">
    <original>L</original>
    <variation>P</variation>
    <location>
        <position position="212"/>
    </location>
</feature>
<feature type="sequence variant" id="VAR_036172" description="In a breast cancer sample; somatic mutation." evidence="5">
    <original>S</original>
    <variation>P</variation>
    <location>
        <position position="248"/>
    </location>
</feature>
<feature type="sequence variant" id="VAR_087298" description="In MKS14." evidence="9">
    <location>
        <begin position="282"/>
        <end position="360"/>
    </location>
</feature>
<feature type="sequence conflict" description="In Ref. 2; BAB15427." evidence="11" ref="2">
    <original>Q</original>
    <variation>R</variation>
    <location>
        <position position="71"/>
    </location>
</feature>
<feature type="sequence conflict" description="In Ref. 2; BAB71199." evidence="11" ref="2">
    <original>D</original>
    <variation>G</variation>
    <location>
        <position position="85"/>
    </location>
</feature>